<organism>
    <name type="scientific">Homo sapiens</name>
    <name type="common">Human</name>
    <dbReference type="NCBI Taxonomy" id="9606"/>
    <lineage>
        <taxon>Eukaryota</taxon>
        <taxon>Metazoa</taxon>
        <taxon>Chordata</taxon>
        <taxon>Craniata</taxon>
        <taxon>Vertebrata</taxon>
        <taxon>Euteleostomi</taxon>
        <taxon>Mammalia</taxon>
        <taxon>Eutheria</taxon>
        <taxon>Euarchontoglires</taxon>
        <taxon>Primates</taxon>
        <taxon>Haplorrhini</taxon>
        <taxon>Catarrhini</taxon>
        <taxon>Hominidae</taxon>
        <taxon>Homo</taxon>
    </lineage>
</organism>
<comment type="function">
    <text evidence="1 4">Acts as a positive regulator of ciliary hedgehog signaling. Required for centriole stability (By similarity). May play a role in counteracting perturbation of actin filaments, such as after treatment with the actin depolymerizing microbial metabolite Chivosazole F (PubMed:28796488).</text>
</comment>
<comment type="subunit">
    <text evidence="1">Interacts with TEDC2. Found in a complex with TEDC1, TEDC2, TUBE1 and TUBD1.</text>
</comment>
<comment type="interaction">
    <interactant intactId="EBI-3247115">
        <id>Q86SX3</id>
    </interactant>
    <interactant intactId="EBI-742651">
        <id>P35638</id>
        <label>DDIT3</label>
    </interactant>
    <organismsDiffer>false</organismsDiffer>
    <experiments>3</experiments>
</comment>
<comment type="interaction">
    <interactant intactId="EBI-3247115">
        <id>Q86SX3</id>
    </interactant>
    <interactant intactId="EBI-8465456">
        <id>Q7L2K0</id>
        <label>TEDC2</label>
    </interactant>
    <organismsDiffer>false</organismsDiffer>
    <experiments>2</experiments>
</comment>
<comment type="subcellular location">
    <subcellularLocation>
        <location evidence="1">Cell projection</location>
        <location evidence="1">Cilium</location>
    </subcellularLocation>
    <subcellularLocation>
        <location evidence="1">Cytoplasm</location>
        <location evidence="1">Cytoskeleton</location>
        <location evidence="1">Microtubule organizing center</location>
        <location evidence="1">Centrosome</location>
        <location evidence="1">Centriole</location>
    </subcellularLocation>
</comment>
<comment type="alternative products">
    <event type="alternative splicing"/>
    <isoform>
        <id>Q86SX3-1</id>
        <name>1</name>
        <sequence type="displayed"/>
    </isoform>
    <isoform>
        <id>Q86SX3-2</id>
        <name>2</name>
        <sequence type="described" ref="VSP_033065"/>
    </isoform>
    <isoform>
        <id>Q86SX3-3</id>
        <name>3</name>
        <sequence type="described" ref="VSP_033063 VSP_033065"/>
    </isoform>
    <isoform>
        <id>Q86SX3-4</id>
        <name>4</name>
        <sequence type="described" ref="VSP_033062 VSP_033064 VSP_033066"/>
    </isoform>
    <isoform>
        <id>Q86SX3-5</id>
        <name>5</name>
        <sequence type="described" ref="VSP_045690 VSP_033065"/>
    </isoform>
    <isoform>
        <id>Q86SX3-6</id>
        <name>6</name>
        <sequence type="described" ref="VSP_033066"/>
    </isoform>
</comment>
<comment type="sequence caution" evidence="8">
    <conflict type="erroneous initiation">
        <sequence resource="EMBL-CDS" id="CAD62351"/>
    </conflict>
    <text>Extended N-terminus.</text>
</comment>
<comment type="sequence caution" evidence="8">
    <conflict type="erroneous initiation">
        <sequence resource="EMBL-CDS" id="CAD62363"/>
    </conflict>
    <text>Extended N-terminus.</text>
</comment>
<comment type="sequence caution" evidence="8">
    <conflict type="erroneous initiation">
        <sequence resource="EMBL-CDS" id="CAD62611"/>
    </conflict>
    <text>Extended N-terminus.</text>
</comment>
<feature type="chain" id="PRO_0000330692" description="Tubulin epsilon and delta complex protein 1">
    <location>
        <begin position="1"/>
        <end position="495"/>
    </location>
</feature>
<feature type="region of interest" description="Disordered" evidence="3">
    <location>
        <begin position="417"/>
        <end position="440"/>
    </location>
</feature>
<feature type="coiled-coil region" evidence="2">
    <location>
        <begin position="355"/>
        <end position="387"/>
    </location>
</feature>
<feature type="coiled-coil region" evidence="2">
    <location>
        <begin position="452"/>
        <end position="480"/>
    </location>
</feature>
<feature type="splice variant" id="VSP_033062" description="In isoform 4." evidence="6">
    <location>
        <begin position="1"/>
        <end position="126"/>
    </location>
</feature>
<feature type="splice variant" id="VSP_033063" description="In isoform 3." evidence="7">
    <original>MGRRRQRVDPAAGARAGALPEAIAALSRSLPSGPSPEIFRRAKFDRPEA</original>
    <variation>MSGQRGDWVQ</variation>
    <location>
        <begin position="1"/>
        <end position="49"/>
    </location>
</feature>
<feature type="splice variant" id="VSP_045690" description="In isoform 5." evidence="7">
    <original>MGRRRQRVDPAAGARAGALPEAIAALSRSLPSGPSPEIFRRAKFDRPEA</original>
    <variation>MSGQRGDW</variation>
    <location>
        <begin position="1"/>
        <end position="49"/>
    </location>
</feature>
<feature type="splice variant" id="VSP_033064" description="In isoform 4." evidence="6">
    <location>
        <begin position="144"/>
        <end position="195"/>
    </location>
</feature>
<feature type="splice variant" id="VSP_033065" description="In isoform 2, isoform 3 and isoform 5." evidence="7">
    <location>
        <begin position="196"/>
        <end position="297"/>
    </location>
</feature>
<feature type="splice variant" id="VSP_033066" description="In isoform 4 and isoform 6." evidence="6">
    <location>
        <begin position="229"/>
        <end position="297"/>
    </location>
</feature>
<feature type="sequence variant" id="VAR_089288" description="Found in patients with primary microcephaly; uncertain significance." evidence="5">
    <original>Q</original>
    <variation>R</variation>
    <location>
        <position position="269"/>
    </location>
</feature>
<reference key="1">
    <citation type="submission" date="2003-02" db="EMBL/GenBank/DDBJ databases">
        <title>Full-length cDNA libraries and normalization.</title>
        <authorList>
            <person name="Li W.B."/>
            <person name="Gruber C."/>
            <person name="Jessee J."/>
            <person name="Polayes D."/>
        </authorList>
    </citation>
    <scope>NUCLEOTIDE SEQUENCE [LARGE SCALE MRNA] (ISOFORMS 1; 2; 3 AND 5)</scope>
    <source>
        <tissue>Cervix carcinoma</tissue>
        <tissue>Placenta</tissue>
    </source>
</reference>
<reference key="2">
    <citation type="journal article" date="2003" name="Nature">
        <title>The DNA sequence and analysis of human chromosome 14.</title>
        <authorList>
            <person name="Heilig R."/>
            <person name="Eckenberg R."/>
            <person name="Petit J.-L."/>
            <person name="Fonknechten N."/>
            <person name="Da Silva C."/>
            <person name="Cattolico L."/>
            <person name="Levy M."/>
            <person name="Barbe V."/>
            <person name="De Berardinis V."/>
            <person name="Ureta-Vidal A."/>
            <person name="Pelletier E."/>
            <person name="Vico V."/>
            <person name="Anthouard V."/>
            <person name="Rowen L."/>
            <person name="Madan A."/>
            <person name="Qin S."/>
            <person name="Sun H."/>
            <person name="Du H."/>
            <person name="Pepin K."/>
            <person name="Artiguenave F."/>
            <person name="Robert C."/>
            <person name="Cruaud C."/>
            <person name="Bruels T."/>
            <person name="Jaillon O."/>
            <person name="Friedlander L."/>
            <person name="Samson G."/>
            <person name="Brottier P."/>
            <person name="Cure S."/>
            <person name="Segurens B."/>
            <person name="Aniere F."/>
            <person name="Samain S."/>
            <person name="Crespeau H."/>
            <person name="Abbasi N."/>
            <person name="Aiach N."/>
            <person name="Boscus D."/>
            <person name="Dickhoff R."/>
            <person name="Dors M."/>
            <person name="Dubois I."/>
            <person name="Friedman C."/>
            <person name="Gouyvenoux M."/>
            <person name="James R."/>
            <person name="Madan A."/>
            <person name="Mairey-Estrada B."/>
            <person name="Mangenot S."/>
            <person name="Martins N."/>
            <person name="Menard M."/>
            <person name="Oztas S."/>
            <person name="Ratcliffe A."/>
            <person name="Shaffer T."/>
            <person name="Trask B."/>
            <person name="Vacherie B."/>
            <person name="Bellemere C."/>
            <person name="Belser C."/>
            <person name="Besnard-Gonnet M."/>
            <person name="Bartol-Mavel D."/>
            <person name="Boutard M."/>
            <person name="Briez-Silla S."/>
            <person name="Combette S."/>
            <person name="Dufosse-Laurent V."/>
            <person name="Ferron C."/>
            <person name="Lechaplais C."/>
            <person name="Louesse C."/>
            <person name="Muselet D."/>
            <person name="Magdelenat G."/>
            <person name="Pateau E."/>
            <person name="Petit E."/>
            <person name="Sirvain-Trukniewicz P."/>
            <person name="Trybou A."/>
            <person name="Vega-Czarny N."/>
            <person name="Bataille E."/>
            <person name="Bluet E."/>
            <person name="Bordelais I."/>
            <person name="Dubois M."/>
            <person name="Dumont C."/>
            <person name="Guerin T."/>
            <person name="Haffray S."/>
            <person name="Hammadi R."/>
            <person name="Muanga J."/>
            <person name="Pellouin V."/>
            <person name="Robert D."/>
            <person name="Wunderle E."/>
            <person name="Gauguet G."/>
            <person name="Roy A."/>
            <person name="Sainte-Marthe L."/>
            <person name="Verdier J."/>
            <person name="Verdier-Discala C."/>
            <person name="Hillier L.W."/>
            <person name="Fulton L."/>
            <person name="McPherson J."/>
            <person name="Matsuda F."/>
            <person name="Wilson R."/>
            <person name="Scarpelli C."/>
            <person name="Gyapay G."/>
            <person name="Wincker P."/>
            <person name="Saurin W."/>
            <person name="Quetier F."/>
            <person name="Waterston R."/>
            <person name="Hood L."/>
            <person name="Weissenbach J."/>
        </authorList>
    </citation>
    <scope>NUCLEOTIDE SEQUENCE [LARGE SCALE GENOMIC DNA]</scope>
</reference>
<reference key="3">
    <citation type="submission" date="2005-07" db="EMBL/GenBank/DDBJ databases">
        <authorList>
            <person name="Mural R.J."/>
            <person name="Istrail S."/>
            <person name="Sutton G.G."/>
            <person name="Florea L."/>
            <person name="Halpern A.L."/>
            <person name="Mobarry C.M."/>
            <person name="Lippert R."/>
            <person name="Walenz B."/>
            <person name="Shatkay H."/>
            <person name="Dew I."/>
            <person name="Miller J.R."/>
            <person name="Flanigan M.J."/>
            <person name="Edwards N.J."/>
            <person name="Bolanos R."/>
            <person name="Fasulo D."/>
            <person name="Halldorsson B.V."/>
            <person name="Hannenhalli S."/>
            <person name="Turner R."/>
            <person name="Yooseph S."/>
            <person name="Lu F."/>
            <person name="Nusskern D.R."/>
            <person name="Shue B.C."/>
            <person name="Zheng X.H."/>
            <person name="Zhong F."/>
            <person name="Delcher A.L."/>
            <person name="Huson D.H."/>
            <person name="Kravitz S.A."/>
            <person name="Mouchard L."/>
            <person name="Reinert K."/>
            <person name="Remington K.A."/>
            <person name="Clark A.G."/>
            <person name="Waterman M.S."/>
            <person name="Eichler E.E."/>
            <person name="Adams M.D."/>
            <person name="Hunkapiller M.W."/>
            <person name="Myers E.W."/>
            <person name="Venter J.C."/>
        </authorList>
    </citation>
    <scope>NUCLEOTIDE SEQUENCE [LARGE SCALE GENOMIC DNA]</scope>
</reference>
<reference key="4">
    <citation type="journal article" date="2004" name="Genome Res.">
        <title>The status, quality, and expansion of the NIH full-length cDNA project: the Mammalian Gene Collection (MGC).</title>
        <authorList>
            <consortium name="The MGC Project Team"/>
        </authorList>
    </citation>
    <scope>NUCLEOTIDE SEQUENCE [LARGE SCALE MRNA] (ISOFORM 4)</scope>
    <source>
        <tissue>Uterus</tissue>
    </source>
</reference>
<reference key="5">
    <citation type="journal article" date="2004" name="Nat. Genet.">
        <title>Complete sequencing and characterization of 21,243 full-length human cDNAs.</title>
        <authorList>
            <person name="Ota T."/>
            <person name="Suzuki Y."/>
            <person name="Nishikawa T."/>
            <person name="Otsuki T."/>
            <person name="Sugiyama T."/>
            <person name="Irie R."/>
            <person name="Wakamatsu A."/>
            <person name="Hayashi K."/>
            <person name="Sato H."/>
            <person name="Nagai K."/>
            <person name="Kimura K."/>
            <person name="Makita H."/>
            <person name="Sekine M."/>
            <person name="Obayashi M."/>
            <person name="Nishi T."/>
            <person name="Shibahara T."/>
            <person name="Tanaka T."/>
            <person name="Ishii S."/>
            <person name="Yamamoto J."/>
            <person name="Saito K."/>
            <person name="Kawai Y."/>
            <person name="Isono Y."/>
            <person name="Nakamura Y."/>
            <person name="Nagahari K."/>
            <person name="Murakami K."/>
            <person name="Yasuda T."/>
            <person name="Iwayanagi T."/>
            <person name="Wagatsuma M."/>
            <person name="Shiratori A."/>
            <person name="Sudo H."/>
            <person name="Hosoiri T."/>
            <person name="Kaku Y."/>
            <person name="Kodaira H."/>
            <person name="Kondo H."/>
            <person name="Sugawara M."/>
            <person name="Takahashi M."/>
            <person name="Kanda K."/>
            <person name="Yokoi T."/>
            <person name="Furuya T."/>
            <person name="Kikkawa E."/>
            <person name="Omura Y."/>
            <person name="Abe K."/>
            <person name="Kamihara K."/>
            <person name="Katsuta N."/>
            <person name="Sato K."/>
            <person name="Tanikawa M."/>
            <person name="Yamazaki M."/>
            <person name="Ninomiya K."/>
            <person name="Ishibashi T."/>
            <person name="Yamashita H."/>
            <person name="Murakawa K."/>
            <person name="Fujimori K."/>
            <person name="Tanai H."/>
            <person name="Kimata M."/>
            <person name="Watanabe M."/>
            <person name="Hiraoka S."/>
            <person name="Chiba Y."/>
            <person name="Ishida S."/>
            <person name="Ono Y."/>
            <person name="Takiguchi S."/>
            <person name="Watanabe S."/>
            <person name="Yosida M."/>
            <person name="Hotuta T."/>
            <person name="Kusano J."/>
            <person name="Kanehori K."/>
            <person name="Takahashi-Fujii A."/>
            <person name="Hara H."/>
            <person name="Tanase T.-O."/>
            <person name="Nomura Y."/>
            <person name="Togiya S."/>
            <person name="Komai F."/>
            <person name="Hara R."/>
            <person name="Takeuchi K."/>
            <person name="Arita M."/>
            <person name="Imose N."/>
            <person name="Musashino K."/>
            <person name="Yuuki H."/>
            <person name="Oshima A."/>
            <person name="Sasaki N."/>
            <person name="Aotsuka S."/>
            <person name="Yoshikawa Y."/>
            <person name="Matsunawa H."/>
            <person name="Ichihara T."/>
            <person name="Shiohata N."/>
            <person name="Sano S."/>
            <person name="Moriya S."/>
            <person name="Momiyama H."/>
            <person name="Satoh N."/>
            <person name="Takami S."/>
            <person name="Terashima Y."/>
            <person name="Suzuki O."/>
            <person name="Nakagawa S."/>
            <person name="Senoh A."/>
            <person name="Mizoguchi H."/>
            <person name="Goto Y."/>
            <person name="Shimizu F."/>
            <person name="Wakebe H."/>
            <person name="Hishigaki H."/>
            <person name="Watanabe T."/>
            <person name="Sugiyama A."/>
            <person name="Takemoto M."/>
            <person name="Kawakami B."/>
            <person name="Yamazaki M."/>
            <person name="Watanabe K."/>
            <person name="Kumagai A."/>
            <person name="Itakura S."/>
            <person name="Fukuzumi Y."/>
            <person name="Fujimori Y."/>
            <person name="Komiyama M."/>
            <person name="Tashiro H."/>
            <person name="Tanigami A."/>
            <person name="Fujiwara T."/>
            <person name="Ono T."/>
            <person name="Yamada K."/>
            <person name="Fujii Y."/>
            <person name="Ozaki K."/>
            <person name="Hirao M."/>
            <person name="Ohmori Y."/>
            <person name="Kawabata A."/>
            <person name="Hikiji T."/>
            <person name="Kobatake N."/>
            <person name="Inagaki H."/>
            <person name="Ikema Y."/>
            <person name="Okamoto S."/>
            <person name="Okitani R."/>
            <person name="Kawakami T."/>
            <person name="Noguchi S."/>
            <person name="Itoh T."/>
            <person name="Shigeta K."/>
            <person name="Senba T."/>
            <person name="Matsumura K."/>
            <person name="Nakajima Y."/>
            <person name="Mizuno T."/>
            <person name="Morinaga M."/>
            <person name="Sasaki M."/>
            <person name="Togashi T."/>
            <person name="Oyama M."/>
            <person name="Hata H."/>
            <person name="Watanabe M."/>
            <person name="Komatsu T."/>
            <person name="Mizushima-Sugano J."/>
            <person name="Satoh T."/>
            <person name="Shirai Y."/>
            <person name="Takahashi Y."/>
            <person name="Nakagawa K."/>
            <person name="Okumura K."/>
            <person name="Nagase T."/>
            <person name="Nomura N."/>
            <person name="Kikuchi H."/>
            <person name="Masuho Y."/>
            <person name="Yamashita R."/>
            <person name="Nakai K."/>
            <person name="Yada T."/>
            <person name="Nakamura Y."/>
            <person name="Ohara O."/>
            <person name="Isogai T."/>
            <person name="Sugano S."/>
        </authorList>
    </citation>
    <scope>NUCLEOTIDE SEQUENCE [LARGE SCALE MRNA] OF 327-495</scope>
    <source>
        <tissue>Spleen</tissue>
    </source>
</reference>
<reference key="6">
    <citation type="journal article" date="2017" name="ACS Chem. Biol.">
        <title>Direct Interaction of Chivosazole F with Actin Elicits Cell Responses Similar to Latrunculin A but Distinct from Chondramide.</title>
        <authorList>
            <person name="Filipuzzi I."/>
            <person name="Thomas J.R."/>
            <person name="Pries V."/>
            <person name="Estoppey D."/>
            <person name="Salcius M."/>
            <person name="Studer C."/>
            <person name="Schirle M."/>
            <person name="Hoepfner D."/>
        </authorList>
    </citation>
    <scope>FUNCTION</scope>
</reference>
<reference key="7">
    <citation type="journal article" date="2024" name="Mol. Biol. Rep.">
        <title>Second report of TEDC1-related microcephaly caused by a novel biallelic mutation in an Iranian consanguineous family.</title>
        <authorList>
            <person name="Sarli A."/>
            <person name="Al Sudani Z.M."/>
            <person name="Vaghefi F."/>
            <person name="Motallebi F."/>
            <person name="Khosravi T."/>
            <person name="Rezaie N."/>
            <person name="Oladnabi M."/>
        </authorList>
    </citation>
    <scope>VARIANT ARG-269</scope>
</reference>
<sequence>MGRRRQRVDPAAGARAGALPEAIAALSRSLPSGPSPEIFRRAKFDRPEATSALWQLLFRVLSPLPAGNALASLALEVQARLVKSALCSQGYPRLALAQLPEDGSQGSRELLLALSWLLARGPVPEQMLAQARVPLGDEMTVCQCEALASPGPPAPHMEAEGPVDVRHVQWLMGKLRFRWRQLVSSQQEQCALLSKIHLYTRGCHSDQSLSHLSVTEAEMLRDPEGGQQVSGAGAAQNLDLAYPKCLHSFCTPGMGPRTFWNDLWLVCEQPGLLPGDWAAPLDPGGASACSLLSPFRALLRTLERENQRLEAVLAWRRSELVFWRWMDTVLGTCAPEVPAAASQPTFLPWVPERGGGELDLVVRELQALEEELREAAERRRAAWEAKAGGCGRGPEWSAARRASREAVEKELGALQQCWERDGGPAQPHGPHRLVRREDGAAGDRDLRAAVVIRTLRSQEACLEAVLRRLQGQCRQELARLVGARPGLIWIPPPGR</sequence>
<proteinExistence type="evidence at protein level"/>
<gene>
    <name evidence="9" type="primary">TEDC1</name>
    <name evidence="9" type="synonym">C14orf80</name>
</gene>
<protein>
    <recommendedName>
        <fullName evidence="8">Tubulin epsilon and delta complex protein 1</fullName>
    </recommendedName>
</protein>
<dbReference type="EMBL" id="BX161477">
    <property type="protein sequence ID" value="CAD61932.1"/>
    <property type="molecule type" value="mRNA"/>
</dbReference>
<dbReference type="EMBL" id="BX248038">
    <property type="protein sequence ID" value="CAD62351.1"/>
    <property type="status" value="ALT_INIT"/>
    <property type="molecule type" value="mRNA"/>
</dbReference>
<dbReference type="EMBL" id="BX248074">
    <property type="protein sequence ID" value="CAD62363.1"/>
    <property type="status" value="ALT_INIT"/>
    <property type="molecule type" value="mRNA"/>
</dbReference>
<dbReference type="EMBL" id="BX248283">
    <property type="protein sequence ID" value="CAD62611.1"/>
    <property type="status" value="ALT_INIT"/>
    <property type="molecule type" value="mRNA"/>
</dbReference>
<dbReference type="EMBL" id="AL928654">
    <property type="status" value="NOT_ANNOTATED_CDS"/>
    <property type="molecule type" value="Genomic_DNA"/>
</dbReference>
<dbReference type="EMBL" id="CH471061">
    <property type="protein sequence ID" value="EAW81929.1"/>
    <property type="molecule type" value="Genomic_DNA"/>
</dbReference>
<dbReference type="EMBL" id="BC016028">
    <property type="protein sequence ID" value="AAH16028.1"/>
    <property type="molecule type" value="mRNA"/>
</dbReference>
<dbReference type="EMBL" id="AK024506">
    <property type="protein sequence ID" value="BAB15796.1"/>
    <property type="molecule type" value="mRNA"/>
</dbReference>
<dbReference type="CCDS" id="CCDS45180.1">
    <molecule id="Q86SX3-5"/>
</dbReference>
<dbReference type="CCDS" id="CCDS45181.1">
    <molecule id="Q86SX3-6"/>
</dbReference>
<dbReference type="CCDS" id="CCDS45182.1">
    <molecule id="Q86SX3-2"/>
</dbReference>
<dbReference type="CCDS" id="CCDS55955.1">
    <molecule id="Q86SX3-3"/>
</dbReference>
<dbReference type="CCDS" id="CCDS91958.1">
    <molecule id="Q86SX3-1"/>
</dbReference>
<dbReference type="RefSeq" id="NP_001128347.1">
    <molecule id="Q86SX3-6"/>
    <property type="nucleotide sequence ID" value="NM_001134875.2"/>
</dbReference>
<dbReference type="RefSeq" id="NP_001128348.1">
    <molecule id="Q86SX3-2"/>
    <property type="nucleotide sequence ID" value="NM_001134876.2"/>
</dbReference>
<dbReference type="RefSeq" id="NP_001128349.1">
    <molecule id="Q86SX3-5"/>
    <property type="nucleotide sequence ID" value="NM_001134877.1"/>
</dbReference>
<dbReference type="RefSeq" id="NP_001185912.1">
    <molecule id="Q86SX3-3"/>
    <property type="nucleotide sequence ID" value="NM_001198983.2"/>
</dbReference>
<dbReference type="RefSeq" id="NP_001354107.1">
    <molecule id="Q86SX3-1"/>
    <property type="nucleotide sequence ID" value="NM_001367178.1"/>
</dbReference>
<dbReference type="SMR" id="Q86SX3"/>
<dbReference type="BioGRID" id="129629">
    <property type="interactions" value="236"/>
</dbReference>
<dbReference type="DIP" id="DIP-62062N"/>
<dbReference type="FunCoup" id="Q86SX3">
    <property type="interactions" value="490"/>
</dbReference>
<dbReference type="IntAct" id="Q86SX3">
    <property type="interactions" value="51"/>
</dbReference>
<dbReference type="STRING" id="9606.ENSP00000376307"/>
<dbReference type="iPTMnet" id="Q86SX3"/>
<dbReference type="PhosphoSitePlus" id="Q86SX3"/>
<dbReference type="BioMuta" id="TEDC1"/>
<dbReference type="DMDM" id="187470846"/>
<dbReference type="jPOST" id="Q86SX3"/>
<dbReference type="MassIVE" id="Q86SX3"/>
<dbReference type="PeptideAtlas" id="Q86SX3"/>
<dbReference type="ProteomicsDB" id="19061"/>
<dbReference type="ProteomicsDB" id="6174"/>
<dbReference type="ProteomicsDB" id="69642">
    <molecule id="Q86SX3-1"/>
</dbReference>
<dbReference type="ProteomicsDB" id="69643">
    <molecule id="Q86SX3-2"/>
</dbReference>
<dbReference type="ProteomicsDB" id="69644">
    <molecule id="Q86SX3-3"/>
</dbReference>
<dbReference type="ProteomicsDB" id="69645">
    <molecule id="Q86SX3-4"/>
</dbReference>
<dbReference type="Pumba" id="Q86SX3"/>
<dbReference type="Antibodypedia" id="48308">
    <property type="antibodies" value="59 antibodies from 12 providers"/>
</dbReference>
<dbReference type="DNASU" id="283643"/>
<dbReference type="Ensembl" id="ENST00000329886.11">
    <molecule id="Q86SX3-3"/>
    <property type="protein sequence ID" value="ENSP00000333010.7"/>
    <property type="gene ID" value="ENSG00000185347.19"/>
</dbReference>
<dbReference type="Ensembl" id="ENST00000354560.10">
    <molecule id="Q86SX3-2"/>
    <property type="protein sequence ID" value="ENSP00000346568.6"/>
    <property type="gene ID" value="ENSG00000185347.19"/>
</dbReference>
<dbReference type="Ensembl" id="ENST00000392522.8">
    <molecule id="Q86SX3-6"/>
    <property type="protein sequence ID" value="ENSP00000376307.3"/>
    <property type="gene ID" value="ENSG00000185347.19"/>
</dbReference>
<dbReference type="Ensembl" id="ENST00000392523.9">
    <molecule id="Q86SX3-1"/>
    <property type="protein sequence ID" value="ENSP00000376308.4"/>
    <property type="gene ID" value="ENSG00000185347.19"/>
</dbReference>
<dbReference type="Ensembl" id="ENST00000392527.5">
    <molecule id="Q86SX3-5"/>
    <property type="protein sequence ID" value="ENSP00000376312.1"/>
    <property type="gene ID" value="ENSG00000185347.19"/>
</dbReference>
<dbReference type="Ensembl" id="ENST00000450383.1">
    <molecule id="Q86SX3-4"/>
    <property type="protein sequence ID" value="ENSP00000391436.1"/>
    <property type="gene ID" value="ENSG00000185347.19"/>
</dbReference>
<dbReference type="GeneID" id="283643"/>
<dbReference type="KEGG" id="hsa:283643"/>
<dbReference type="MANE-Select" id="ENST00000392523.9">
    <property type="protein sequence ID" value="ENSP00000376308.4"/>
    <property type="RefSeq nucleotide sequence ID" value="NM_001367178.1"/>
    <property type="RefSeq protein sequence ID" value="NP_001354107.1"/>
</dbReference>
<dbReference type="UCSC" id="uc001yrj.4">
    <molecule id="Q86SX3-1"/>
    <property type="organism name" value="human"/>
</dbReference>
<dbReference type="AGR" id="HGNC:20127"/>
<dbReference type="CTD" id="283643"/>
<dbReference type="GeneCards" id="TEDC1"/>
<dbReference type="HGNC" id="HGNC:20127">
    <property type="gene designation" value="TEDC1"/>
</dbReference>
<dbReference type="HPA" id="ENSG00000185347">
    <property type="expression patterns" value="Low tissue specificity"/>
</dbReference>
<dbReference type="neXtProt" id="NX_Q86SX3"/>
<dbReference type="OpenTargets" id="ENSG00000185347"/>
<dbReference type="PharmGKB" id="PA134885988"/>
<dbReference type="VEuPathDB" id="HostDB:ENSG00000185347"/>
<dbReference type="eggNOG" id="ENOG502RXA4">
    <property type="taxonomic scope" value="Eukaryota"/>
</dbReference>
<dbReference type="GeneTree" id="ENSGT00390000011474"/>
<dbReference type="HOGENOM" id="CLU_052124_0_0_1"/>
<dbReference type="InParanoid" id="Q86SX3"/>
<dbReference type="OMA" id="FIPPMKT"/>
<dbReference type="OrthoDB" id="9906141at2759"/>
<dbReference type="PAN-GO" id="Q86SX3">
    <property type="GO annotations" value="0 GO annotations based on evolutionary models"/>
</dbReference>
<dbReference type="PhylomeDB" id="Q86SX3"/>
<dbReference type="TreeFam" id="TF330945"/>
<dbReference type="PathwayCommons" id="Q86SX3"/>
<dbReference type="SignaLink" id="Q86SX3"/>
<dbReference type="BioGRID-ORCS" id="283643">
    <property type="hits" value="401 hits in 1153 CRISPR screens"/>
</dbReference>
<dbReference type="GenomeRNAi" id="283643"/>
<dbReference type="Pharos" id="Q86SX3">
    <property type="development level" value="Tdark"/>
</dbReference>
<dbReference type="PRO" id="PR:Q86SX3"/>
<dbReference type="Proteomes" id="UP000005640">
    <property type="component" value="Chromosome 14"/>
</dbReference>
<dbReference type="RNAct" id="Q86SX3">
    <property type="molecule type" value="protein"/>
</dbReference>
<dbReference type="Bgee" id="ENSG00000185347">
    <property type="expression patterns" value="Expressed in tendon of biceps brachii and 104 other cell types or tissues"/>
</dbReference>
<dbReference type="ExpressionAtlas" id="Q86SX3">
    <property type="expression patterns" value="baseline and differential"/>
</dbReference>
<dbReference type="GO" id="GO:0005814">
    <property type="term" value="C:centriole"/>
    <property type="evidence" value="ECO:0000250"/>
    <property type="project" value="UniProtKB"/>
</dbReference>
<dbReference type="GO" id="GO:0005929">
    <property type="term" value="C:cilium"/>
    <property type="evidence" value="ECO:0000250"/>
    <property type="project" value="UniProtKB"/>
</dbReference>
<dbReference type="GO" id="GO:0005737">
    <property type="term" value="C:cytoplasm"/>
    <property type="evidence" value="ECO:0007669"/>
    <property type="project" value="UniProtKB-KW"/>
</dbReference>
<dbReference type="GO" id="GO:0045880">
    <property type="term" value="P:positive regulation of smoothened signaling pathway"/>
    <property type="evidence" value="ECO:0000250"/>
    <property type="project" value="UniProtKB"/>
</dbReference>
<dbReference type="InterPro" id="IPR043535">
    <property type="entry name" value="TEDC1"/>
</dbReference>
<dbReference type="InterPro" id="IPR027996">
    <property type="entry name" value="TEDC1_dom"/>
</dbReference>
<dbReference type="PANTHER" id="PTHR35076">
    <property type="entry name" value="TUBULIN EPSILON AND DELTA COMPLEX PROTEIN 1"/>
    <property type="match status" value="1"/>
</dbReference>
<dbReference type="PANTHER" id="PTHR35076:SF1">
    <property type="entry name" value="TUBULIN EPSILON AND DELTA COMPLEX PROTEIN 1"/>
    <property type="match status" value="1"/>
</dbReference>
<dbReference type="Pfam" id="PF14970">
    <property type="entry name" value="TEDC1"/>
    <property type="match status" value="2"/>
</dbReference>
<name>TEDC1_HUMAN</name>
<evidence type="ECO:0000250" key="1">
    <source>
        <dbReference type="UniProtKB" id="Q3UK37"/>
    </source>
</evidence>
<evidence type="ECO:0000255" key="2"/>
<evidence type="ECO:0000256" key="3">
    <source>
        <dbReference type="SAM" id="MobiDB-lite"/>
    </source>
</evidence>
<evidence type="ECO:0000269" key="4">
    <source>
    </source>
</evidence>
<evidence type="ECO:0000269" key="5">
    <source>
    </source>
</evidence>
<evidence type="ECO:0000303" key="6">
    <source>
    </source>
</evidence>
<evidence type="ECO:0000303" key="7">
    <source ref="1"/>
</evidence>
<evidence type="ECO:0000305" key="8"/>
<evidence type="ECO:0000312" key="9">
    <source>
        <dbReference type="HGNC" id="HGNC:20127"/>
    </source>
</evidence>
<keyword id="KW-0025">Alternative splicing</keyword>
<keyword id="KW-0966">Cell projection</keyword>
<keyword id="KW-0175">Coiled coil</keyword>
<keyword id="KW-0963">Cytoplasm</keyword>
<keyword id="KW-0206">Cytoskeleton</keyword>
<keyword id="KW-1267">Proteomics identification</keyword>
<keyword id="KW-1185">Reference proteome</keyword>
<accession>Q86SX3</accession>
<accession>B5MDG3</accession>
<accession>E9PAQ4</accession>
<accession>Q86TT3</accession>
<accession>Q86TT4</accession>
<accession>Q86TT5</accession>
<accession>Q96B41</accession>
<accession>Q9H7H4</accession>